<reference key="1">
    <citation type="submission" date="2007-05" db="EMBL/GenBank/DDBJ databases">
        <title>Complete sequence of Geobacter uraniireducens Rf4.</title>
        <authorList>
            <consortium name="US DOE Joint Genome Institute"/>
            <person name="Copeland A."/>
            <person name="Lucas S."/>
            <person name="Lapidus A."/>
            <person name="Barry K."/>
            <person name="Detter J.C."/>
            <person name="Glavina del Rio T."/>
            <person name="Hammon N."/>
            <person name="Israni S."/>
            <person name="Dalin E."/>
            <person name="Tice H."/>
            <person name="Pitluck S."/>
            <person name="Chertkov O."/>
            <person name="Brettin T."/>
            <person name="Bruce D."/>
            <person name="Han C."/>
            <person name="Schmutz J."/>
            <person name="Larimer F."/>
            <person name="Land M."/>
            <person name="Hauser L."/>
            <person name="Kyrpides N."/>
            <person name="Mikhailova N."/>
            <person name="Shelobolina E."/>
            <person name="Aklujkar M."/>
            <person name="Lovley D."/>
            <person name="Richardson P."/>
        </authorList>
    </citation>
    <scope>NUCLEOTIDE SEQUENCE [LARGE SCALE GENOMIC DNA]</scope>
    <source>
        <strain>ATCC BAA-1134 / JCM 13001 / Rf4</strain>
    </source>
</reference>
<name>RL34_GEOUR</name>
<keyword id="KW-1185">Reference proteome</keyword>
<keyword id="KW-0687">Ribonucleoprotein</keyword>
<keyword id="KW-0689">Ribosomal protein</keyword>
<evidence type="ECO:0000255" key="1">
    <source>
        <dbReference type="HAMAP-Rule" id="MF_00391"/>
    </source>
</evidence>
<evidence type="ECO:0000305" key="2"/>
<protein>
    <recommendedName>
        <fullName evidence="1">Large ribosomal subunit protein bL34</fullName>
    </recommendedName>
    <alternativeName>
        <fullName evidence="2">50S ribosomal protein L34</fullName>
    </alternativeName>
</protein>
<proteinExistence type="inferred from homology"/>
<gene>
    <name evidence="1" type="primary">rpmH</name>
    <name type="ordered locus">Gura_4432</name>
</gene>
<sequence>MKRTYQPSNVSRKRTHGFLVRMSTKNGRLVIKRRRAKGRKNLAVSIASK</sequence>
<dbReference type="EMBL" id="CP000698">
    <property type="protein sequence ID" value="ABQ28575.1"/>
    <property type="molecule type" value="Genomic_DNA"/>
</dbReference>
<dbReference type="RefSeq" id="WP_011941201.1">
    <property type="nucleotide sequence ID" value="NC_009483.1"/>
</dbReference>
<dbReference type="SMR" id="A5G9V7"/>
<dbReference type="STRING" id="351605.Gura_4432"/>
<dbReference type="KEGG" id="gur:Gura_4432"/>
<dbReference type="HOGENOM" id="CLU_129938_2_0_7"/>
<dbReference type="OrthoDB" id="9804164at2"/>
<dbReference type="Proteomes" id="UP000006695">
    <property type="component" value="Chromosome"/>
</dbReference>
<dbReference type="GO" id="GO:1990904">
    <property type="term" value="C:ribonucleoprotein complex"/>
    <property type="evidence" value="ECO:0007669"/>
    <property type="project" value="UniProtKB-KW"/>
</dbReference>
<dbReference type="GO" id="GO:0005840">
    <property type="term" value="C:ribosome"/>
    <property type="evidence" value="ECO:0007669"/>
    <property type="project" value="UniProtKB-KW"/>
</dbReference>
<dbReference type="GO" id="GO:0003735">
    <property type="term" value="F:structural constituent of ribosome"/>
    <property type="evidence" value="ECO:0007669"/>
    <property type="project" value="InterPro"/>
</dbReference>
<dbReference type="GO" id="GO:0006412">
    <property type="term" value="P:translation"/>
    <property type="evidence" value="ECO:0007669"/>
    <property type="project" value="UniProtKB-UniRule"/>
</dbReference>
<dbReference type="FunFam" id="1.10.287.3980:FF:000001">
    <property type="entry name" value="Mitochondrial ribosomal protein L34"/>
    <property type="match status" value="1"/>
</dbReference>
<dbReference type="Gene3D" id="1.10.287.3980">
    <property type="match status" value="1"/>
</dbReference>
<dbReference type="HAMAP" id="MF_00391">
    <property type="entry name" value="Ribosomal_bL34"/>
    <property type="match status" value="1"/>
</dbReference>
<dbReference type="InterPro" id="IPR000271">
    <property type="entry name" value="Ribosomal_bL34"/>
</dbReference>
<dbReference type="InterPro" id="IPR020939">
    <property type="entry name" value="Ribosomal_bL34_CS"/>
</dbReference>
<dbReference type="NCBIfam" id="TIGR01030">
    <property type="entry name" value="rpmH_bact"/>
    <property type="match status" value="1"/>
</dbReference>
<dbReference type="PANTHER" id="PTHR14503:SF4">
    <property type="entry name" value="LARGE RIBOSOMAL SUBUNIT PROTEIN BL34M"/>
    <property type="match status" value="1"/>
</dbReference>
<dbReference type="PANTHER" id="PTHR14503">
    <property type="entry name" value="MITOCHONDRIAL RIBOSOMAL PROTEIN 34 FAMILY MEMBER"/>
    <property type="match status" value="1"/>
</dbReference>
<dbReference type="Pfam" id="PF00468">
    <property type="entry name" value="Ribosomal_L34"/>
    <property type="match status" value="1"/>
</dbReference>
<dbReference type="PROSITE" id="PS00784">
    <property type="entry name" value="RIBOSOMAL_L34"/>
    <property type="match status" value="1"/>
</dbReference>
<organism>
    <name type="scientific">Geotalea uraniireducens (strain Rf4)</name>
    <name type="common">Geobacter uraniireducens</name>
    <dbReference type="NCBI Taxonomy" id="351605"/>
    <lineage>
        <taxon>Bacteria</taxon>
        <taxon>Pseudomonadati</taxon>
        <taxon>Thermodesulfobacteriota</taxon>
        <taxon>Desulfuromonadia</taxon>
        <taxon>Geobacterales</taxon>
        <taxon>Geobacteraceae</taxon>
        <taxon>Geotalea</taxon>
    </lineage>
</organism>
<accession>A5G9V7</accession>
<comment type="similarity">
    <text evidence="1">Belongs to the bacterial ribosomal protein bL34 family.</text>
</comment>
<feature type="chain" id="PRO_1000080252" description="Large ribosomal subunit protein bL34">
    <location>
        <begin position="1"/>
        <end position="49"/>
    </location>
</feature>